<feature type="chain" id="PRO_0000262528" description="Palmdelphin">
    <location>
        <begin position="1"/>
        <end position="551"/>
    </location>
</feature>
<feature type="region of interest" description="Disordered" evidence="4">
    <location>
        <begin position="248"/>
        <end position="280"/>
    </location>
</feature>
<feature type="region of interest" description="Disordered" evidence="4">
    <location>
        <begin position="342"/>
        <end position="392"/>
    </location>
</feature>
<feature type="region of interest" description="Disordered" evidence="4">
    <location>
        <begin position="449"/>
        <end position="535"/>
    </location>
</feature>
<feature type="coiled-coil region" evidence="3">
    <location>
        <begin position="12"/>
        <end position="106"/>
    </location>
</feature>
<feature type="compositionally biased region" description="Basic and acidic residues" evidence="4">
    <location>
        <begin position="248"/>
        <end position="259"/>
    </location>
</feature>
<feature type="compositionally biased region" description="Polar residues" evidence="4">
    <location>
        <begin position="270"/>
        <end position="280"/>
    </location>
</feature>
<feature type="compositionally biased region" description="Basic and acidic residues" evidence="4">
    <location>
        <begin position="484"/>
        <end position="495"/>
    </location>
</feature>
<feature type="modified residue" description="N-acetylmethionine" evidence="13">
    <location>
        <position position="1"/>
    </location>
</feature>
<feature type="modified residue" description="Phosphoserine" evidence="11">
    <location>
        <position position="135"/>
    </location>
</feature>
<feature type="modified residue" description="Phosphothreonine" evidence="2">
    <location>
        <position position="271"/>
    </location>
</feature>
<feature type="modified residue" description="Phosphoserine" evidence="12">
    <location>
        <position position="321"/>
    </location>
</feature>
<feature type="modified residue" description="Phosphoserine" evidence="2">
    <location>
        <position position="370"/>
    </location>
</feature>
<feature type="modified residue" description="Phosphoserine" evidence="14">
    <location>
        <position position="384"/>
    </location>
</feature>
<feature type="modified residue" description="Phosphoserine" evidence="2">
    <location>
        <position position="385"/>
    </location>
</feature>
<feature type="modified residue" description="Phosphoserine" evidence="14">
    <location>
        <position position="498"/>
    </location>
</feature>
<feature type="modified residue" description="Phosphoserine" evidence="10">
    <location>
        <position position="515"/>
    </location>
</feature>
<feature type="modified residue" description="Phosphoserine" evidence="12">
    <location>
        <position position="520"/>
    </location>
</feature>
<feature type="cross-link" description="Glycyl lysine isopeptide (Lys-Gly) (interchain with G-Cter in SUMO2)" evidence="16">
    <location>
        <position position="125"/>
    </location>
</feature>
<feature type="cross-link" description="Glycyl lysine isopeptide (Lys-Gly) (interchain with G-Cter in SUMO1); alternate" evidence="15">
    <location>
        <position position="179"/>
    </location>
</feature>
<feature type="cross-link" description="Glycyl lysine isopeptide (Lys-Gly) (interchain with G-Cter in SUMO2); alternate" evidence="16">
    <location>
        <position position="179"/>
    </location>
</feature>
<feature type="splice variant" id="VSP_021786" description="In isoform 3." evidence="7">
    <location>
        <begin position="1"/>
        <end position="175"/>
    </location>
</feature>
<feature type="splice variant" id="VSP_021787" description="In isoform 2." evidence="6 8">
    <original>MEEAELVKGRLQAITDKRKIQEEISQKRLKIEEDKLKHQHLKKKALREKWLLDGISSGKEQEEMKKQNQQDQHQIQVLEQSILRLEKEIQDLEKAELQI</original>
    <variation>MASRWNQQRKRTGRDEEAK</variation>
    <location>
        <begin position="1"/>
        <end position="99"/>
    </location>
</feature>
<feature type="sequence variant" id="VAR_053805" description="In dbSNP:rs11802902.">
    <original>H</original>
    <variation>Q</variation>
    <location>
        <position position="73"/>
    </location>
</feature>
<feature type="sequence variant" id="VAR_053806" description="In dbSNP:rs35258980.">
    <original>N</original>
    <variation>S</variation>
    <location>
        <position position="229"/>
    </location>
</feature>
<feature type="sequence variant" id="VAR_053807" description="In dbSNP:rs35317701.">
    <original>E</original>
    <variation>D</variation>
    <location>
        <position position="459"/>
    </location>
</feature>
<feature type="sequence conflict" description="In Ref. 3; BAB14946." evidence="9" ref="3">
    <original>E</original>
    <variation>K</variation>
    <location>
        <position position="248"/>
    </location>
</feature>
<feature type="sequence conflict" description="In Ref. 4; CAC01335." evidence="9" ref="4">
    <original>S</original>
    <variation>L</variation>
    <location>
        <position position="385"/>
    </location>
</feature>
<evidence type="ECO:0000250" key="1"/>
<evidence type="ECO:0000250" key="2">
    <source>
        <dbReference type="UniProtKB" id="Q9JHU2"/>
    </source>
</evidence>
<evidence type="ECO:0000255" key="3"/>
<evidence type="ECO:0000256" key="4">
    <source>
        <dbReference type="SAM" id="MobiDB-lite"/>
    </source>
</evidence>
<evidence type="ECO:0000269" key="5">
    <source>
    </source>
</evidence>
<evidence type="ECO:0000303" key="6">
    <source>
    </source>
</evidence>
<evidence type="ECO:0000303" key="7">
    <source>
    </source>
</evidence>
<evidence type="ECO:0000303" key="8">
    <source ref="4"/>
</evidence>
<evidence type="ECO:0000305" key="9"/>
<evidence type="ECO:0007744" key="10">
    <source>
    </source>
</evidence>
<evidence type="ECO:0007744" key="11">
    <source>
    </source>
</evidence>
<evidence type="ECO:0007744" key="12">
    <source>
    </source>
</evidence>
<evidence type="ECO:0007744" key="13">
    <source>
    </source>
</evidence>
<evidence type="ECO:0007744" key="14">
    <source>
    </source>
</evidence>
<evidence type="ECO:0007744" key="15">
    <source>
    </source>
</evidence>
<evidence type="ECO:0007744" key="16">
    <source>
    </source>
</evidence>
<gene>
    <name type="primary">PALMD</name>
    <name type="synonym">C1orf11</name>
    <name type="synonym">PALML</name>
</gene>
<keyword id="KW-0007">Acetylation</keyword>
<keyword id="KW-0025">Alternative splicing</keyword>
<keyword id="KW-0966">Cell projection</keyword>
<keyword id="KW-0175">Coiled coil</keyword>
<keyword id="KW-0963">Cytoplasm</keyword>
<keyword id="KW-1017">Isopeptide bond</keyword>
<keyword id="KW-0597">Phosphoprotein</keyword>
<keyword id="KW-1267">Proteomics identification</keyword>
<keyword id="KW-1185">Reference proteome</keyword>
<keyword id="KW-0770">Synapse</keyword>
<keyword id="KW-0832">Ubl conjugation</keyword>
<dbReference type="EMBL" id="AJ312214">
    <property type="protein sequence ID" value="CAC59692.1"/>
    <property type="molecule type" value="mRNA"/>
</dbReference>
<dbReference type="EMBL" id="AF262379">
    <property type="protein sequence ID" value="AAL33879.1"/>
    <property type="molecule type" value="mRNA"/>
</dbReference>
<dbReference type="EMBL" id="AK000278">
    <property type="protein sequence ID" value="BAA91047.1"/>
    <property type="molecule type" value="mRNA"/>
</dbReference>
<dbReference type="EMBL" id="AK024654">
    <property type="protein sequence ID" value="BAB14946.1"/>
    <property type="molecule type" value="mRNA"/>
</dbReference>
<dbReference type="EMBL" id="AL390970">
    <property type="protein sequence ID" value="CAC01335.1"/>
    <property type="molecule type" value="mRNA"/>
</dbReference>
<dbReference type="EMBL" id="AL390971">
    <property type="protein sequence ID" value="CAC01336.1"/>
    <property type="status" value="ALT_SEQ"/>
    <property type="molecule type" value="mRNA"/>
</dbReference>
<dbReference type="EMBL" id="AL390972">
    <property type="protein sequence ID" value="CAC01337.1"/>
    <property type="molecule type" value="mRNA"/>
</dbReference>
<dbReference type="EMBL" id="AL390973">
    <property type="protein sequence ID" value="CAC01338.1"/>
    <property type="molecule type" value="mRNA"/>
</dbReference>
<dbReference type="EMBL" id="BC012570">
    <property type="protein sequence ID" value="AAH12570.1"/>
    <property type="molecule type" value="mRNA"/>
</dbReference>
<dbReference type="CCDS" id="CCDS758.1">
    <molecule id="Q9NP74-1"/>
</dbReference>
<dbReference type="RefSeq" id="NP_060204.1">
    <molecule id="Q9NP74-1"/>
    <property type="nucleotide sequence ID" value="NM_017734.5"/>
</dbReference>
<dbReference type="SMR" id="Q9NP74"/>
<dbReference type="BioGRID" id="120221">
    <property type="interactions" value="16"/>
</dbReference>
<dbReference type="FunCoup" id="Q9NP74">
    <property type="interactions" value="588"/>
</dbReference>
<dbReference type="IntAct" id="Q9NP74">
    <property type="interactions" value="19"/>
</dbReference>
<dbReference type="STRING" id="9606.ENSP00000263174"/>
<dbReference type="GlyGen" id="Q9NP74">
    <property type="glycosylation" value="1 site"/>
</dbReference>
<dbReference type="iPTMnet" id="Q9NP74"/>
<dbReference type="PhosphoSitePlus" id="Q9NP74"/>
<dbReference type="BioMuta" id="PALMD"/>
<dbReference type="DMDM" id="74734298"/>
<dbReference type="jPOST" id="Q9NP74"/>
<dbReference type="MassIVE" id="Q9NP74"/>
<dbReference type="PaxDb" id="9606-ENSP00000263174"/>
<dbReference type="PeptideAtlas" id="Q9NP74"/>
<dbReference type="ProteomicsDB" id="81912">
    <molecule id="Q9NP74-1"/>
</dbReference>
<dbReference type="ProteomicsDB" id="81913">
    <molecule id="Q9NP74-2"/>
</dbReference>
<dbReference type="ProteomicsDB" id="81914">
    <molecule id="Q9NP74-3"/>
</dbReference>
<dbReference type="Pumba" id="Q9NP74"/>
<dbReference type="Antibodypedia" id="2825">
    <property type="antibodies" value="152 antibodies from 26 providers"/>
</dbReference>
<dbReference type="DNASU" id="54873"/>
<dbReference type="Ensembl" id="ENST00000263174.9">
    <molecule id="Q9NP74-1"/>
    <property type="protein sequence ID" value="ENSP00000263174.4"/>
    <property type="gene ID" value="ENSG00000099260.12"/>
</dbReference>
<dbReference type="GeneID" id="54873"/>
<dbReference type="KEGG" id="hsa:54873"/>
<dbReference type="MANE-Select" id="ENST00000263174.9">
    <property type="protein sequence ID" value="ENSP00000263174.4"/>
    <property type="RefSeq nucleotide sequence ID" value="NM_017734.5"/>
    <property type="RefSeq protein sequence ID" value="NP_060204.1"/>
</dbReference>
<dbReference type="UCSC" id="uc001dsg.4">
    <molecule id="Q9NP74-1"/>
    <property type="organism name" value="human"/>
</dbReference>
<dbReference type="AGR" id="HGNC:15846"/>
<dbReference type="CTD" id="54873"/>
<dbReference type="DisGeNET" id="54873"/>
<dbReference type="GeneCards" id="PALMD"/>
<dbReference type="HGNC" id="HGNC:15846">
    <property type="gene designation" value="PALMD"/>
</dbReference>
<dbReference type="HPA" id="ENSG00000099260">
    <property type="expression patterns" value="Tissue enhanced (adipose)"/>
</dbReference>
<dbReference type="MIM" id="610182">
    <property type="type" value="gene"/>
</dbReference>
<dbReference type="neXtProt" id="NX_Q9NP74"/>
<dbReference type="OpenTargets" id="ENSG00000099260"/>
<dbReference type="PharmGKB" id="PA32925"/>
<dbReference type="VEuPathDB" id="HostDB:ENSG00000099260"/>
<dbReference type="eggNOG" id="ENOG502QVMH">
    <property type="taxonomic scope" value="Eukaryota"/>
</dbReference>
<dbReference type="GeneTree" id="ENSGT00940000157718"/>
<dbReference type="HOGENOM" id="CLU_038333_0_0_1"/>
<dbReference type="InParanoid" id="Q9NP74"/>
<dbReference type="OrthoDB" id="9937247at2759"/>
<dbReference type="PAN-GO" id="Q9NP74">
    <property type="GO annotations" value="1 GO annotation based on evolutionary models"/>
</dbReference>
<dbReference type="PhylomeDB" id="Q9NP74"/>
<dbReference type="TreeFam" id="TF105402"/>
<dbReference type="PathwayCommons" id="Q9NP74"/>
<dbReference type="SignaLink" id="Q9NP74"/>
<dbReference type="BioGRID-ORCS" id="54873">
    <property type="hits" value="9 hits in 1150 CRISPR screens"/>
</dbReference>
<dbReference type="ChiTaRS" id="PALMD">
    <property type="organism name" value="human"/>
</dbReference>
<dbReference type="GenomeRNAi" id="54873"/>
<dbReference type="Pharos" id="Q9NP74">
    <property type="development level" value="Tbio"/>
</dbReference>
<dbReference type="PRO" id="PR:Q9NP74"/>
<dbReference type="Proteomes" id="UP000005640">
    <property type="component" value="Chromosome 1"/>
</dbReference>
<dbReference type="RNAct" id="Q9NP74">
    <property type="molecule type" value="protein"/>
</dbReference>
<dbReference type="Bgee" id="ENSG00000099260">
    <property type="expression patterns" value="Expressed in synovial joint and 187 other cell types or tissues"/>
</dbReference>
<dbReference type="ExpressionAtlas" id="Q9NP74">
    <property type="expression patterns" value="baseline and differential"/>
</dbReference>
<dbReference type="GO" id="GO:0005737">
    <property type="term" value="C:cytoplasm"/>
    <property type="evidence" value="ECO:0000318"/>
    <property type="project" value="GO_Central"/>
</dbReference>
<dbReference type="GO" id="GO:0043197">
    <property type="term" value="C:dendritic spine"/>
    <property type="evidence" value="ECO:0007669"/>
    <property type="project" value="UniProtKB-SubCell"/>
</dbReference>
<dbReference type="GO" id="GO:0016020">
    <property type="term" value="C:membrane"/>
    <property type="evidence" value="ECO:0007669"/>
    <property type="project" value="InterPro"/>
</dbReference>
<dbReference type="GO" id="GO:0008360">
    <property type="term" value="P:regulation of cell shape"/>
    <property type="evidence" value="ECO:0007669"/>
    <property type="project" value="InterPro"/>
</dbReference>
<dbReference type="InterPro" id="IPR004965">
    <property type="entry name" value="Paralemmin"/>
</dbReference>
<dbReference type="PANTHER" id="PTHR46881">
    <property type="entry name" value="PALMDELPHIN"/>
    <property type="match status" value="1"/>
</dbReference>
<dbReference type="PANTHER" id="PTHR46881:SF1">
    <property type="entry name" value="PALMDELPHIN"/>
    <property type="match status" value="1"/>
</dbReference>
<dbReference type="Pfam" id="PF03285">
    <property type="entry name" value="Paralemmin"/>
    <property type="match status" value="2"/>
</dbReference>
<reference key="1">
    <citation type="journal article" date="2001" name="Biochem. Biophys. Res. Commun.">
        <title>The paralemmin protein family: identification of paralemmin-2, an isoform differentially spliced to AKAP2/AKAP-KL, and of palmdelphin, a more distant cytosolic relative.</title>
        <authorList>
            <person name="Hu B."/>
            <person name="Copeland N.G."/>
            <person name="Gilbert D.J."/>
            <person name="Jenkins N.A."/>
            <person name="Kilimann M.W."/>
        </authorList>
    </citation>
    <scope>NUCLEOTIDE SEQUENCE [MRNA] (ISOFORM 1)</scope>
    <source>
        <tissue>Muscle</tissue>
    </source>
</reference>
<reference key="2">
    <citation type="journal article" date="2001" name="Gene">
        <title>PALML, a novel paralemmin-related gene mapping on human chromosome 1p21.</title>
        <authorList>
            <person name="Andreu N."/>
            <person name="Escarceller M."/>
            <person name="Feather S."/>
            <person name="Devriendt K."/>
            <person name="Wolf A.S."/>
            <person name="Estivill X."/>
            <person name="Sumoy L."/>
        </authorList>
    </citation>
    <scope>NUCLEOTIDE SEQUENCE [MRNA] (ISOFORMS 1 AND 2)</scope>
    <scope>SUBCELLULAR LOCATION</scope>
    <scope>TISSUE SPECIFICITY</scope>
</reference>
<reference key="3">
    <citation type="journal article" date="2004" name="Nat. Genet.">
        <title>Complete sequencing and characterization of 21,243 full-length human cDNAs.</title>
        <authorList>
            <person name="Ota T."/>
            <person name="Suzuki Y."/>
            <person name="Nishikawa T."/>
            <person name="Otsuki T."/>
            <person name="Sugiyama T."/>
            <person name="Irie R."/>
            <person name="Wakamatsu A."/>
            <person name="Hayashi K."/>
            <person name="Sato H."/>
            <person name="Nagai K."/>
            <person name="Kimura K."/>
            <person name="Makita H."/>
            <person name="Sekine M."/>
            <person name="Obayashi M."/>
            <person name="Nishi T."/>
            <person name="Shibahara T."/>
            <person name="Tanaka T."/>
            <person name="Ishii S."/>
            <person name="Yamamoto J."/>
            <person name="Saito K."/>
            <person name="Kawai Y."/>
            <person name="Isono Y."/>
            <person name="Nakamura Y."/>
            <person name="Nagahari K."/>
            <person name="Murakami K."/>
            <person name="Yasuda T."/>
            <person name="Iwayanagi T."/>
            <person name="Wagatsuma M."/>
            <person name="Shiratori A."/>
            <person name="Sudo H."/>
            <person name="Hosoiri T."/>
            <person name="Kaku Y."/>
            <person name="Kodaira H."/>
            <person name="Kondo H."/>
            <person name="Sugawara M."/>
            <person name="Takahashi M."/>
            <person name="Kanda K."/>
            <person name="Yokoi T."/>
            <person name="Furuya T."/>
            <person name="Kikkawa E."/>
            <person name="Omura Y."/>
            <person name="Abe K."/>
            <person name="Kamihara K."/>
            <person name="Katsuta N."/>
            <person name="Sato K."/>
            <person name="Tanikawa M."/>
            <person name="Yamazaki M."/>
            <person name="Ninomiya K."/>
            <person name="Ishibashi T."/>
            <person name="Yamashita H."/>
            <person name="Murakawa K."/>
            <person name="Fujimori K."/>
            <person name="Tanai H."/>
            <person name="Kimata M."/>
            <person name="Watanabe M."/>
            <person name="Hiraoka S."/>
            <person name="Chiba Y."/>
            <person name="Ishida S."/>
            <person name="Ono Y."/>
            <person name="Takiguchi S."/>
            <person name="Watanabe S."/>
            <person name="Yosida M."/>
            <person name="Hotuta T."/>
            <person name="Kusano J."/>
            <person name="Kanehori K."/>
            <person name="Takahashi-Fujii A."/>
            <person name="Hara H."/>
            <person name="Tanase T.-O."/>
            <person name="Nomura Y."/>
            <person name="Togiya S."/>
            <person name="Komai F."/>
            <person name="Hara R."/>
            <person name="Takeuchi K."/>
            <person name="Arita M."/>
            <person name="Imose N."/>
            <person name="Musashino K."/>
            <person name="Yuuki H."/>
            <person name="Oshima A."/>
            <person name="Sasaki N."/>
            <person name="Aotsuka S."/>
            <person name="Yoshikawa Y."/>
            <person name="Matsunawa H."/>
            <person name="Ichihara T."/>
            <person name="Shiohata N."/>
            <person name="Sano S."/>
            <person name="Moriya S."/>
            <person name="Momiyama H."/>
            <person name="Satoh N."/>
            <person name="Takami S."/>
            <person name="Terashima Y."/>
            <person name="Suzuki O."/>
            <person name="Nakagawa S."/>
            <person name="Senoh A."/>
            <person name="Mizoguchi H."/>
            <person name="Goto Y."/>
            <person name="Shimizu F."/>
            <person name="Wakebe H."/>
            <person name="Hishigaki H."/>
            <person name="Watanabe T."/>
            <person name="Sugiyama A."/>
            <person name="Takemoto M."/>
            <person name="Kawakami B."/>
            <person name="Yamazaki M."/>
            <person name="Watanabe K."/>
            <person name="Kumagai A."/>
            <person name="Itakura S."/>
            <person name="Fukuzumi Y."/>
            <person name="Fujimori Y."/>
            <person name="Komiyama M."/>
            <person name="Tashiro H."/>
            <person name="Tanigami A."/>
            <person name="Fujiwara T."/>
            <person name="Ono T."/>
            <person name="Yamada K."/>
            <person name="Fujii Y."/>
            <person name="Ozaki K."/>
            <person name="Hirao M."/>
            <person name="Ohmori Y."/>
            <person name="Kawabata A."/>
            <person name="Hikiji T."/>
            <person name="Kobatake N."/>
            <person name="Inagaki H."/>
            <person name="Ikema Y."/>
            <person name="Okamoto S."/>
            <person name="Okitani R."/>
            <person name="Kawakami T."/>
            <person name="Noguchi S."/>
            <person name="Itoh T."/>
            <person name="Shigeta K."/>
            <person name="Senba T."/>
            <person name="Matsumura K."/>
            <person name="Nakajima Y."/>
            <person name="Mizuno T."/>
            <person name="Morinaga M."/>
            <person name="Sasaki M."/>
            <person name="Togashi T."/>
            <person name="Oyama M."/>
            <person name="Hata H."/>
            <person name="Watanabe M."/>
            <person name="Komatsu T."/>
            <person name="Mizushima-Sugano J."/>
            <person name="Satoh T."/>
            <person name="Shirai Y."/>
            <person name="Takahashi Y."/>
            <person name="Nakagawa K."/>
            <person name="Okumura K."/>
            <person name="Nagase T."/>
            <person name="Nomura N."/>
            <person name="Kikuchi H."/>
            <person name="Masuho Y."/>
            <person name="Yamashita R."/>
            <person name="Nakai K."/>
            <person name="Yada T."/>
            <person name="Nakamura Y."/>
            <person name="Ohara O."/>
            <person name="Isogai T."/>
            <person name="Sugano S."/>
        </authorList>
    </citation>
    <scope>NUCLEOTIDE SEQUENCE [LARGE SCALE MRNA] (ISOFORMS 1 AND 3)</scope>
</reference>
<reference key="4">
    <citation type="submission" date="2000-08" db="EMBL/GenBank/DDBJ databases">
        <authorList>
            <consortium name="The European IMAGE consortium"/>
        </authorList>
    </citation>
    <scope>NUCLEOTIDE SEQUENCE [LARGE SCALE MRNA] (ISOFORMS 1 AND 2)</scope>
</reference>
<reference key="5">
    <citation type="journal article" date="2004" name="Genome Res.">
        <title>The status, quality, and expansion of the NIH full-length cDNA project: the Mammalian Gene Collection (MGC).</title>
        <authorList>
            <consortium name="The MGC Project Team"/>
        </authorList>
    </citation>
    <scope>NUCLEOTIDE SEQUENCE [LARGE SCALE MRNA] (ISOFORM 1)</scope>
    <source>
        <tissue>Skeletal muscle</tissue>
    </source>
</reference>
<reference key="6">
    <citation type="journal article" date="2006" name="Cell">
        <title>Global, in vivo, and site-specific phosphorylation dynamics in signaling networks.</title>
        <authorList>
            <person name="Olsen J.V."/>
            <person name="Blagoev B."/>
            <person name="Gnad F."/>
            <person name="Macek B."/>
            <person name="Kumar C."/>
            <person name="Mortensen P."/>
            <person name="Mann M."/>
        </authorList>
    </citation>
    <scope>IDENTIFICATION BY MASS SPECTROMETRY [LARGE SCALE ANALYSIS]</scope>
    <source>
        <tissue>Cervix carcinoma</tissue>
    </source>
</reference>
<reference key="7">
    <citation type="journal article" date="2008" name="J. Proteome Res.">
        <title>Combining protein-based IMAC, peptide-based IMAC, and MudPIT for efficient phosphoproteomic analysis.</title>
        <authorList>
            <person name="Cantin G.T."/>
            <person name="Yi W."/>
            <person name="Lu B."/>
            <person name="Park S.K."/>
            <person name="Xu T."/>
            <person name="Lee J.-D."/>
            <person name="Yates J.R. III"/>
        </authorList>
    </citation>
    <scope>PHOSPHORYLATION [LARGE SCALE ANALYSIS] AT SER-515</scope>
    <scope>IDENTIFICATION BY MASS SPECTROMETRY [LARGE SCALE ANALYSIS]</scope>
    <source>
        <tissue>Cervix carcinoma</tissue>
    </source>
</reference>
<reference key="8">
    <citation type="journal article" date="2008" name="Proc. Natl. Acad. Sci. U.S.A.">
        <title>A quantitative atlas of mitotic phosphorylation.</title>
        <authorList>
            <person name="Dephoure N."/>
            <person name="Zhou C."/>
            <person name="Villen J."/>
            <person name="Beausoleil S.A."/>
            <person name="Bakalarski C.E."/>
            <person name="Elledge S.J."/>
            <person name="Gygi S.P."/>
        </authorList>
    </citation>
    <scope>PHOSPHORYLATION [LARGE SCALE ANALYSIS] AT SER-135</scope>
    <scope>IDENTIFICATION BY MASS SPECTROMETRY [LARGE SCALE ANALYSIS]</scope>
    <source>
        <tissue>Cervix carcinoma</tissue>
    </source>
</reference>
<reference key="9">
    <citation type="journal article" date="2010" name="Sci. Signal.">
        <title>Quantitative phosphoproteomics reveals widespread full phosphorylation site occupancy during mitosis.</title>
        <authorList>
            <person name="Olsen J.V."/>
            <person name="Vermeulen M."/>
            <person name="Santamaria A."/>
            <person name="Kumar C."/>
            <person name="Miller M.L."/>
            <person name="Jensen L.J."/>
            <person name="Gnad F."/>
            <person name="Cox J."/>
            <person name="Jensen T.S."/>
            <person name="Nigg E.A."/>
            <person name="Brunak S."/>
            <person name="Mann M."/>
        </authorList>
    </citation>
    <scope>PHOSPHORYLATION [LARGE SCALE ANALYSIS] AT SER-321 AND SER-520</scope>
    <scope>IDENTIFICATION BY MASS SPECTROMETRY [LARGE SCALE ANALYSIS]</scope>
    <source>
        <tissue>Cervix carcinoma</tissue>
    </source>
</reference>
<reference key="10">
    <citation type="journal article" date="2012" name="Proc. Natl. Acad. Sci. U.S.A.">
        <title>N-terminal acetylome analyses and functional insights of the N-terminal acetyltransferase NatB.</title>
        <authorList>
            <person name="Van Damme P."/>
            <person name="Lasa M."/>
            <person name="Polevoda B."/>
            <person name="Gazquez C."/>
            <person name="Elosegui-Artola A."/>
            <person name="Kim D.S."/>
            <person name="De Juan-Pardo E."/>
            <person name="Demeyer K."/>
            <person name="Hole K."/>
            <person name="Larrea E."/>
            <person name="Timmerman E."/>
            <person name="Prieto J."/>
            <person name="Arnesen T."/>
            <person name="Sherman F."/>
            <person name="Gevaert K."/>
            <person name="Aldabe R."/>
        </authorList>
    </citation>
    <scope>ACETYLATION [LARGE SCALE ANALYSIS] AT MET-1</scope>
    <scope>IDENTIFICATION BY MASS SPECTROMETRY [LARGE SCALE ANALYSIS]</scope>
</reference>
<reference key="11">
    <citation type="journal article" date="2014" name="J. Proteomics">
        <title>An enzyme assisted RP-RPLC approach for in-depth analysis of human liver phosphoproteome.</title>
        <authorList>
            <person name="Bian Y."/>
            <person name="Song C."/>
            <person name="Cheng K."/>
            <person name="Dong M."/>
            <person name="Wang F."/>
            <person name="Huang J."/>
            <person name="Sun D."/>
            <person name="Wang L."/>
            <person name="Ye M."/>
            <person name="Zou H."/>
        </authorList>
    </citation>
    <scope>PHOSPHORYLATION [LARGE SCALE ANALYSIS] AT SER-384 AND SER-498</scope>
    <scope>IDENTIFICATION BY MASS SPECTROMETRY [LARGE SCALE ANALYSIS]</scope>
    <source>
        <tissue>Liver</tissue>
    </source>
</reference>
<reference key="12">
    <citation type="journal article" date="2014" name="Proc. Natl. Acad. Sci. U.S.A.">
        <title>Mapping of SUMO sites and analysis of SUMOylation changes induced by external stimuli.</title>
        <authorList>
            <person name="Impens F."/>
            <person name="Radoshevich L."/>
            <person name="Cossart P."/>
            <person name="Ribet D."/>
        </authorList>
    </citation>
    <scope>SUMOYLATION [LARGE SCALE ANALYSIS] AT LYS-179</scope>
    <scope>IDENTIFICATION BY MASS SPECTROMETRY [LARGE SCALE ANALYSIS]</scope>
</reference>
<reference key="13">
    <citation type="journal article" date="2017" name="Nat. Struct. Mol. Biol.">
        <title>Site-specific mapping of the human SUMO proteome reveals co-modification with phosphorylation.</title>
        <authorList>
            <person name="Hendriks I.A."/>
            <person name="Lyon D."/>
            <person name="Young C."/>
            <person name="Jensen L.J."/>
            <person name="Vertegaal A.C."/>
            <person name="Nielsen M.L."/>
        </authorList>
    </citation>
    <scope>SUMOYLATION [LARGE SCALE ANALYSIS] AT LYS-125 AND LYS-179</scope>
    <scope>IDENTIFICATION BY MASS SPECTROMETRY [LARGE SCALE ANALYSIS]</scope>
</reference>
<sequence length="551" mass="62758">MEEAELVKGRLQAITDKRKIQEEISQKRLKIEEDKLKHQHLKKKALREKWLLDGISSGKEQEEMKKQNQQDQHQIQVLEQSILRLEKEIQDLEKAELQISTKEEAILKKLKSIERTTEDIIRSVKVEREERAEESIEDIYANIPDLPKSYIPSRLRKEINEEKEDDEQNRKALYAMEIKVEKDLKTGESTVLSSIPLPSDDFKGTGIKVYDDGQKSVYAVSSNHSAAYNGTDGLAPVEVEELLRQASERNSKSPTEYHEPVYANPFYRPTTPQRETVTPGPNFQERIKIKTNGLGIGVNESIHNMGNGLSEERGNNFNHISPIPPVPHPRSVIQQAEEKLHTPQKRLMTPWEESNVMQDKDAPSPKPRLSPRETIFGKSEHQNSSPTCQEDEEDVRYNIVHSLPPDINDTEPVTMIFMGYQQAEDSEEDKKFLTGYDGIIHAELVVIDDEEEEDEGEAEKPSYHPIAPHSQVYQPAKPTPLPRKRSEASPHENTNHKSPHKNSISLKEQEESLGSPVHHSPFDAQTTGDGTEDPSLTALRMRMAKLGKKVI</sequence>
<comment type="subunit">
    <text evidence="1">Interacts with GLUL.</text>
</comment>
<comment type="interaction">
    <interactant intactId="EBI-2811699">
        <id>Q9NP74</id>
    </interactant>
    <interactant intactId="EBI-11961672">
        <id>O94929-2</id>
        <label>ABLIM3</label>
    </interactant>
    <organismsDiffer>false</organismsDiffer>
    <experiments>3</experiments>
</comment>
<comment type="interaction">
    <interactant intactId="EBI-2811699">
        <id>Q9NP74</id>
    </interactant>
    <interactant intactId="EBI-21603100">
        <id>P26378-2</id>
        <label>ELAVL4</label>
    </interactant>
    <organismsDiffer>false</organismsDiffer>
    <experiments>3</experiments>
</comment>
<comment type="interaction">
    <interactant intactId="EBI-2811699">
        <id>Q9NP74</id>
    </interactant>
    <interactant intactId="EBI-466029">
        <id>P42858</id>
        <label>HTT</label>
    </interactant>
    <organismsDiffer>false</organismsDiffer>
    <experiments>6</experiments>
</comment>
<comment type="interaction">
    <interactant intactId="EBI-2811699">
        <id>Q9NP74</id>
    </interactant>
    <interactant intactId="EBI-720609">
        <id>O76024</id>
        <label>WFS1</label>
    </interactant>
    <organismsDiffer>false</organismsDiffer>
    <experiments>3</experiments>
</comment>
<comment type="subcellular location">
    <subcellularLocation>
        <location evidence="5">Cytoplasm</location>
    </subcellularLocation>
    <subcellularLocation>
        <location evidence="5">Cell projection</location>
        <location evidence="5">Dendrite</location>
    </subcellularLocation>
    <subcellularLocation>
        <location evidence="1">Cell projection</location>
        <location evidence="1">Dendritic spine</location>
    </subcellularLocation>
</comment>
<comment type="alternative products">
    <event type="alternative splicing"/>
    <isoform>
        <id>Q9NP74-1</id>
        <name>1</name>
        <sequence type="displayed"/>
    </isoform>
    <isoform>
        <id>Q9NP74-2</id>
        <name>2</name>
        <sequence type="described" ref="VSP_021787"/>
    </isoform>
    <isoform>
        <id>Q9NP74-3</id>
        <name>3</name>
        <sequence type="described" ref="VSP_021786"/>
    </isoform>
</comment>
<comment type="tissue specificity">
    <text evidence="5">Ubiquitous. Most abundant in cardiac and skeletal muscle.</text>
</comment>
<comment type="PTM">
    <text evidence="1">Phosphorylated.</text>
</comment>
<comment type="similarity">
    <text evidence="9">Belongs to the paralemmin family.</text>
</comment>
<comment type="sequence caution" evidence="9">
    <conflict type="miscellaneous discrepancy">
        <sequence resource="EMBL-CDS" id="CAC01336"/>
    </conflict>
    <text>Contaminating sequence. Potential poly-A sequence.</text>
</comment>
<name>PALMD_HUMAN</name>
<accession>Q9NP74</accession>
<accession>Q9H7E6</accession>
<accession>Q9NPM5</accession>
<accession>Q9NPM6</accession>
<accession>Q9NPS0</accession>
<protein>
    <recommendedName>
        <fullName>Palmdelphin</fullName>
    </recommendedName>
    <alternativeName>
        <fullName>Paralemmin-like protein</fullName>
    </alternativeName>
</protein>
<proteinExistence type="evidence at protein level"/>
<organism>
    <name type="scientific">Homo sapiens</name>
    <name type="common">Human</name>
    <dbReference type="NCBI Taxonomy" id="9606"/>
    <lineage>
        <taxon>Eukaryota</taxon>
        <taxon>Metazoa</taxon>
        <taxon>Chordata</taxon>
        <taxon>Craniata</taxon>
        <taxon>Vertebrata</taxon>
        <taxon>Euteleostomi</taxon>
        <taxon>Mammalia</taxon>
        <taxon>Eutheria</taxon>
        <taxon>Euarchontoglires</taxon>
        <taxon>Primates</taxon>
        <taxon>Haplorrhini</taxon>
        <taxon>Catarrhini</taxon>
        <taxon>Hominidae</taxon>
        <taxon>Homo</taxon>
    </lineage>
</organism>